<evidence type="ECO:0000250" key="1">
    <source>
        <dbReference type="UniProtKB" id="Q04649"/>
    </source>
</evidence>
<evidence type="ECO:0000250" key="2">
    <source>
        <dbReference type="UniProtKB" id="Q99626"/>
    </source>
</evidence>
<evidence type="ECO:0000255" key="3">
    <source>
        <dbReference type="PROSITE-ProRule" id="PRU00108"/>
    </source>
</evidence>
<evidence type="ECO:0000256" key="4">
    <source>
        <dbReference type="SAM" id="MobiDB-lite"/>
    </source>
</evidence>
<evidence type="ECO:0000269" key="5">
    <source>
    </source>
</evidence>
<evidence type="ECO:0000269" key="6">
    <source>
    </source>
</evidence>
<evidence type="ECO:0000269" key="7">
    <source>
    </source>
</evidence>
<evidence type="ECO:0000269" key="8">
    <source>
    </source>
</evidence>
<evidence type="ECO:0000269" key="9">
    <source>
    </source>
</evidence>
<evidence type="ECO:0000269" key="10">
    <source>
    </source>
</evidence>
<evidence type="ECO:0000269" key="11">
    <source>
    </source>
</evidence>
<evidence type="ECO:0000305" key="12"/>
<reference key="1">
    <citation type="journal article" date="1994" name="J. Biol. Chem.">
        <title>Structure of the murine homeobox gene cdx-2. Expression in embryonic and adult intestinal epithelium.</title>
        <authorList>
            <person name="James R.J."/>
            <person name="Erler T."/>
            <person name="Kazenwadel J."/>
        </authorList>
    </citation>
    <scope>NUCLEOTIDE SEQUENCE</scope>
    <scope>SUBCELLULAR LOCATION</scope>
    <scope>TISSUE SPECIFICITY</scope>
    <source>
        <strain>BALB/cJ</strain>
    </source>
</reference>
<reference key="2">
    <citation type="journal article" date="1994" name="Mol. Cell. Biol.">
        <title>A homeodomain protein related to caudal regulates intestine-specific gene transcription.</title>
        <authorList>
            <person name="Suh E."/>
            <person name="Chen L."/>
            <person name="Taylor J."/>
            <person name="Traber P.G."/>
        </authorList>
    </citation>
    <scope>NUCLEOTIDE SEQUENCE [MRNA]</scope>
    <scope>FUNCTION</scope>
    <scope>SUBUNIT</scope>
    <scope>TISSUE SPECIFICITY</scope>
    <source>
        <tissue>Small intestine</tissue>
    </source>
</reference>
<reference key="3">
    <citation type="journal article" date="1991" name="J. Biol. Chem.">
        <title>Homeobox gene expression in the intestinal epithelium of adult mice.</title>
        <authorList>
            <person name="James R.J."/>
            <person name="Kazenwadel J."/>
        </authorList>
    </citation>
    <scope>NUCLEOTIDE SEQUENCE OF 204-229</scope>
    <scope>TISSUE SPECIFICITY</scope>
</reference>
<reference key="4">
    <citation type="journal article" date="1998" name="FEBS Lett.">
        <title>Colon carbonic anhydrase 1: transactivation of gene expression by the homeodomain protein Cdx2.</title>
        <authorList>
            <person name="Drummond F.J."/>
            <person name="Sowden J."/>
            <person name="Morrison K."/>
            <person name="Edwards Y.H."/>
        </authorList>
    </citation>
    <scope>FUNCTION</scope>
</reference>
<reference key="5">
    <citation type="journal article" date="1999" name="J. Bone Miner. Res.">
        <title>The caudal-related homeodomain protein Cdx-2 regulates vitamin D receptor gene expression in the small intestine.</title>
        <authorList>
            <person name="Yamamoto H."/>
            <person name="Miyamoto K."/>
            <person name="Li B."/>
            <person name="Taketani Y."/>
            <person name="Kitano M."/>
            <person name="Inoue Y."/>
            <person name="Morita K."/>
            <person name="Pike J.W."/>
            <person name="Takeda E."/>
        </authorList>
    </citation>
    <scope>FUNCTION</scope>
</reference>
<reference key="6">
    <citation type="journal article" date="2001" name="Gastroenterology">
        <title>Phosphorylation of the serine 60 residue within the Cdx2 activation domain mediates its transactivation capacity.</title>
        <authorList>
            <person name="Rings E.H."/>
            <person name="Boudreau F."/>
            <person name="Taylor J.K."/>
            <person name="Moffett J."/>
            <person name="Suh E.R."/>
            <person name="Traber P.G."/>
        </authorList>
    </citation>
    <scope>SUBUNIT</scope>
    <scope>SUBCELLULAR LOCATION</scope>
    <scope>TISSUE SPECIFICITY</scope>
    <scope>PHOSPHORYLATION AT SER-60</scope>
    <scope>MUTAGENESIS OF SER-60</scope>
</reference>
<reference key="7">
    <citation type="journal article" date="2005" name="Oncogene">
        <title>Phosphorylation of the homeotic tumor suppressor Cdx2 mediates its ubiquitin-dependent proteasome degradation.</title>
        <authorList>
            <person name="Gross I."/>
            <person name="Lhermitte B."/>
            <person name="Domon-Dell C."/>
            <person name="Duluc I."/>
            <person name="Martin E."/>
            <person name="Gaiddon C."/>
            <person name="Kedinger M."/>
            <person name="Freund J.N."/>
        </authorList>
    </citation>
    <scope>FUNCTION</scope>
    <scope>TISSUE SPECIFICITY</scope>
    <scope>UBIQUITINATION</scope>
    <scope>MOTIF</scope>
    <scope>PHOSPHORYLATION AT SER-281</scope>
</reference>
<proteinExistence type="evidence at protein level"/>
<dbReference type="EMBL" id="U00454">
    <property type="protein sequence ID" value="AAA19645.1"/>
    <property type="molecule type" value="Unassigned_DNA"/>
</dbReference>
<dbReference type="EMBL" id="S74520">
    <property type="protein sequence ID" value="AAB32251.1"/>
    <property type="molecule type" value="mRNA"/>
</dbReference>
<dbReference type="CCDS" id="CCDS19878.1"/>
<dbReference type="PIR" id="A53808">
    <property type="entry name" value="A53808"/>
</dbReference>
<dbReference type="RefSeq" id="NP_031699.2">
    <property type="nucleotide sequence ID" value="NM_007673.3"/>
</dbReference>
<dbReference type="SMR" id="P43241"/>
<dbReference type="BioGRID" id="198664">
    <property type="interactions" value="57"/>
</dbReference>
<dbReference type="FunCoup" id="P43241">
    <property type="interactions" value="181"/>
</dbReference>
<dbReference type="IntAct" id="P43241">
    <property type="interactions" value="4"/>
</dbReference>
<dbReference type="STRING" id="10090.ENSMUSP00000031650"/>
<dbReference type="iPTMnet" id="P43241"/>
<dbReference type="PhosphoSitePlus" id="P43241"/>
<dbReference type="PaxDb" id="10090-ENSMUSP00000031650"/>
<dbReference type="PeptideAtlas" id="P43241"/>
<dbReference type="ProteomicsDB" id="281523"/>
<dbReference type="Antibodypedia" id="3700">
    <property type="antibodies" value="1293 antibodies from 48 providers"/>
</dbReference>
<dbReference type="DNASU" id="12591"/>
<dbReference type="Ensembl" id="ENSMUST00000031650.4">
    <property type="protein sequence ID" value="ENSMUSP00000031650.4"/>
    <property type="gene ID" value="ENSMUSG00000029646.4"/>
</dbReference>
<dbReference type="GeneID" id="12591"/>
<dbReference type="KEGG" id="mmu:12591"/>
<dbReference type="UCSC" id="uc009anz.1">
    <property type="organism name" value="mouse"/>
</dbReference>
<dbReference type="AGR" id="MGI:88361"/>
<dbReference type="CTD" id="1045"/>
<dbReference type="MGI" id="MGI:88361">
    <property type="gene designation" value="Cdx2"/>
</dbReference>
<dbReference type="VEuPathDB" id="HostDB:ENSMUSG00000029646"/>
<dbReference type="eggNOG" id="KOG0848">
    <property type="taxonomic scope" value="Eukaryota"/>
</dbReference>
<dbReference type="GeneTree" id="ENSGT00940000161261"/>
<dbReference type="HOGENOM" id="CLU_073177_1_0_1"/>
<dbReference type="InParanoid" id="P43241"/>
<dbReference type="OMA" id="DKDMSMY"/>
<dbReference type="OrthoDB" id="6159439at2759"/>
<dbReference type="PhylomeDB" id="P43241"/>
<dbReference type="TreeFam" id="TF351605"/>
<dbReference type="BioGRID-ORCS" id="12591">
    <property type="hits" value="3 hits in 79 CRISPR screens"/>
</dbReference>
<dbReference type="PRO" id="PR:P43241"/>
<dbReference type="Proteomes" id="UP000000589">
    <property type="component" value="Chromosome 5"/>
</dbReference>
<dbReference type="RNAct" id="P43241">
    <property type="molecule type" value="protein"/>
</dbReference>
<dbReference type="Bgee" id="ENSMUSG00000029646">
    <property type="expression patterns" value="Expressed in paneth cell and 48 other cell types or tissues"/>
</dbReference>
<dbReference type="ExpressionAtlas" id="P43241">
    <property type="expression patterns" value="baseline and differential"/>
</dbReference>
<dbReference type="GO" id="GO:0000794">
    <property type="term" value="C:condensed nuclear chromosome"/>
    <property type="evidence" value="ECO:0000314"/>
    <property type="project" value="MGI"/>
</dbReference>
<dbReference type="GO" id="GO:0005654">
    <property type="term" value="C:nucleoplasm"/>
    <property type="evidence" value="ECO:0007669"/>
    <property type="project" value="Ensembl"/>
</dbReference>
<dbReference type="GO" id="GO:0005634">
    <property type="term" value="C:nucleus"/>
    <property type="evidence" value="ECO:0000314"/>
    <property type="project" value="MGI"/>
</dbReference>
<dbReference type="GO" id="GO:0032991">
    <property type="term" value="C:protein-containing complex"/>
    <property type="evidence" value="ECO:0000314"/>
    <property type="project" value="MGI"/>
</dbReference>
<dbReference type="GO" id="GO:0017053">
    <property type="term" value="C:transcription repressor complex"/>
    <property type="evidence" value="ECO:0000314"/>
    <property type="project" value="MGI"/>
</dbReference>
<dbReference type="GO" id="GO:0003700">
    <property type="term" value="F:DNA-binding transcription factor activity"/>
    <property type="evidence" value="ECO:0000314"/>
    <property type="project" value="UniProtKB"/>
</dbReference>
<dbReference type="GO" id="GO:0001227">
    <property type="term" value="F:DNA-binding transcription repressor activity, RNA polymerase II-specific"/>
    <property type="evidence" value="ECO:0007669"/>
    <property type="project" value="Ensembl"/>
</dbReference>
<dbReference type="GO" id="GO:0008327">
    <property type="term" value="F:methyl-CpG binding"/>
    <property type="evidence" value="ECO:0000250"/>
    <property type="project" value="UniProtKB"/>
</dbReference>
<dbReference type="GO" id="GO:0000978">
    <property type="term" value="F:RNA polymerase II cis-regulatory region sequence-specific DNA binding"/>
    <property type="evidence" value="ECO:0000314"/>
    <property type="project" value="UniProtKB"/>
</dbReference>
<dbReference type="GO" id="GO:0043565">
    <property type="term" value="F:sequence-specific DNA binding"/>
    <property type="evidence" value="ECO:0000314"/>
    <property type="project" value="MGI"/>
</dbReference>
<dbReference type="GO" id="GO:0009952">
    <property type="term" value="P:anterior/posterior pattern specification"/>
    <property type="evidence" value="ECO:0000316"/>
    <property type="project" value="MGI"/>
</dbReference>
<dbReference type="GO" id="GO:0001824">
    <property type="term" value="P:blastocyst development"/>
    <property type="evidence" value="ECO:0000315"/>
    <property type="project" value="MGI"/>
</dbReference>
<dbReference type="GO" id="GO:0001568">
    <property type="term" value="P:blood vessel development"/>
    <property type="evidence" value="ECO:0000316"/>
    <property type="project" value="MGI"/>
</dbReference>
<dbReference type="GO" id="GO:0008333">
    <property type="term" value="P:endosome to lysosome transport"/>
    <property type="evidence" value="ECO:0000315"/>
    <property type="project" value="MGI"/>
</dbReference>
<dbReference type="GO" id="GO:0045197">
    <property type="term" value="P:establishment or maintenance of epithelial cell apical/basal polarity"/>
    <property type="evidence" value="ECO:0000315"/>
    <property type="project" value="MGI"/>
</dbReference>
<dbReference type="GO" id="GO:0060575">
    <property type="term" value="P:intestinal epithelial cell differentiation"/>
    <property type="evidence" value="ECO:0000315"/>
    <property type="project" value="UniProtKB"/>
</dbReference>
<dbReference type="GO" id="GO:0060711">
    <property type="term" value="P:labyrinthine layer development"/>
    <property type="evidence" value="ECO:0000316"/>
    <property type="project" value="MGI"/>
</dbReference>
<dbReference type="GO" id="GO:0000122">
    <property type="term" value="P:negative regulation of transcription by RNA polymerase II"/>
    <property type="evidence" value="ECO:0000314"/>
    <property type="project" value="MGI"/>
</dbReference>
<dbReference type="GO" id="GO:0007389">
    <property type="term" value="P:pattern specification process"/>
    <property type="evidence" value="ECO:0000315"/>
    <property type="project" value="MGI"/>
</dbReference>
<dbReference type="GO" id="GO:0001890">
    <property type="term" value="P:placenta development"/>
    <property type="evidence" value="ECO:0000316"/>
    <property type="project" value="MGI"/>
</dbReference>
<dbReference type="GO" id="GO:0045597">
    <property type="term" value="P:positive regulation of cell differentiation"/>
    <property type="evidence" value="ECO:0000314"/>
    <property type="project" value="MGI"/>
</dbReference>
<dbReference type="GO" id="GO:0008284">
    <property type="term" value="P:positive regulation of cell population proliferation"/>
    <property type="evidence" value="ECO:0007669"/>
    <property type="project" value="Ensembl"/>
</dbReference>
<dbReference type="GO" id="GO:0045944">
    <property type="term" value="P:positive regulation of transcription by RNA polymerase II"/>
    <property type="evidence" value="ECO:0000314"/>
    <property type="project" value="UniProtKB"/>
</dbReference>
<dbReference type="GO" id="GO:0014807">
    <property type="term" value="P:regulation of somitogenesis"/>
    <property type="evidence" value="ECO:0000315"/>
    <property type="project" value="UniProtKB"/>
</dbReference>
<dbReference type="GO" id="GO:0006357">
    <property type="term" value="P:regulation of transcription by RNA polymerase II"/>
    <property type="evidence" value="ECO:0000314"/>
    <property type="project" value="MGI"/>
</dbReference>
<dbReference type="GO" id="GO:0035019">
    <property type="term" value="P:somatic stem cell population maintenance"/>
    <property type="evidence" value="ECO:0000315"/>
    <property type="project" value="MGI"/>
</dbReference>
<dbReference type="GO" id="GO:0048863">
    <property type="term" value="P:stem cell differentiation"/>
    <property type="evidence" value="ECO:0000315"/>
    <property type="project" value="MGI"/>
</dbReference>
<dbReference type="GO" id="GO:0001829">
    <property type="term" value="P:trophectodermal cell differentiation"/>
    <property type="evidence" value="ECO:0000314"/>
    <property type="project" value="MGI"/>
</dbReference>
<dbReference type="CDD" id="cd00086">
    <property type="entry name" value="homeodomain"/>
    <property type="match status" value="1"/>
</dbReference>
<dbReference type="FunFam" id="1.10.10.60:FF:000089">
    <property type="entry name" value="Caudal type homeobox 4"/>
    <property type="match status" value="1"/>
</dbReference>
<dbReference type="Gene3D" id="1.10.10.60">
    <property type="entry name" value="Homeodomain-like"/>
    <property type="match status" value="1"/>
</dbReference>
<dbReference type="InterPro" id="IPR006820">
    <property type="entry name" value="Caudal_activation_dom"/>
</dbReference>
<dbReference type="InterPro" id="IPR047152">
    <property type="entry name" value="Caudal_homeobox"/>
</dbReference>
<dbReference type="InterPro" id="IPR001356">
    <property type="entry name" value="HD"/>
</dbReference>
<dbReference type="InterPro" id="IPR020479">
    <property type="entry name" value="HD_metazoa"/>
</dbReference>
<dbReference type="InterPro" id="IPR017970">
    <property type="entry name" value="Homeobox_CS"/>
</dbReference>
<dbReference type="InterPro" id="IPR009057">
    <property type="entry name" value="Homeodomain-like_sf"/>
</dbReference>
<dbReference type="InterPro" id="IPR000047">
    <property type="entry name" value="HTH_motif"/>
</dbReference>
<dbReference type="PANTHER" id="PTHR24332">
    <property type="entry name" value="HOMEOBOX PROTEIN CDX"/>
    <property type="match status" value="1"/>
</dbReference>
<dbReference type="PANTHER" id="PTHR24332:SF27">
    <property type="entry name" value="HOMEOBOX PROTEIN CDX-2"/>
    <property type="match status" value="1"/>
</dbReference>
<dbReference type="Pfam" id="PF04731">
    <property type="entry name" value="Caudal_act"/>
    <property type="match status" value="1"/>
</dbReference>
<dbReference type="Pfam" id="PF00046">
    <property type="entry name" value="Homeodomain"/>
    <property type="match status" value="1"/>
</dbReference>
<dbReference type="PRINTS" id="PR00024">
    <property type="entry name" value="HOMEOBOX"/>
</dbReference>
<dbReference type="PRINTS" id="PR00031">
    <property type="entry name" value="HTHREPRESSR"/>
</dbReference>
<dbReference type="SMART" id="SM00389">
    <property type="entry name" value="HOX"/>
    <property type="match status" value="1"/>
</dbReference>
<dbReference type="SUPFAM" id="SSF46689">
    <property type="entry name" value="Homeodomain-like"/>
    <property type="match status" value="1"/>
</dbReference>
<dbReference type="PROSITE" id="PS00027">
    <property type="entry name" value="HOMEOBOX_1"/>
    <property type="match status" value="1"/>
</dbReference>
<dbReference type="PROSITE" id="PS50071">
    <property type="entry name" value="HOMEOBOX_2"/>
    <property type="match status" value="1"/>
</dbReference>
<comment type="function">
    <text evidence="1 2 6 9 10 11">Transcription factor which regulates the transcription of multiple genes expressed in the intestinal epithelium (PubMed:16027724, PubMed:9933478). Binds to the promoter of the intestinal sucrase-isomaltase SI and activates SI transcription (PubMed:7935448). Binds to the DNA sequence 5'-ATAAAAACTTAT-3' in the promoter region of VDR and activates VDR transcription (PubMed:9933478). Binds to and activates transcription of LPH (By similarity). Activates transcription of CLDN2 and intestinal mucin MUC2 (PubMed:16027724). Binds to the 5'-AATTTTTTACAACACCT-3' DNA sequence in the promoter region of CA1 and activates CA1 transcription (PubMed:9512360). Important in broad range of functions from early differentiation to maintenance of the intestinal epithelial lining of both the small and large intestine. Binds preferentially to methylated DNA (By similarity).</text>
</comment>
<comment type="subunit">
    <text evidence="5 9">Can bind DNA as a monomer or homodimer.</text>
</comment>
<comment type="subcellular location">
    <subcellularLocation>
        <location evidence="5 8">Nucleus</location>
    </subcellularLocation>
</comment>
<comment type="tissue specificity">
    <text evidence="5 6 7 8 9">In the intestine, detected in ileum and proximal and distal colon (at protein level) (PubMed:16027724). In adult small intestine, predominantly localized in crypt and lower villus cells of the epithelium (at protein level) (PubMed:11729123). Expressed in the intestine but not detected in other tissues including stomach, liver, kidney, spleen, brain, heart, lung, pancreas, skeletal muscle and testis (PubMed:7935448). Expressed specifically in gut epithelium where it is not restricted to a particular cell lineage. Abundant expression is seen in the proximal colon with slightly lower levels in distal colon (PubMed:1671571, PubMed:7910823). Expression in the proximal colon is not restricted either to a particular cell lineage or stage of differentiation while in the distal colon it is more abundant in the differentiated cells towards the top of the crypt.</text>
</comment>
<comment type="PTM">
    <text evidence="6">Ubiquitinated, leading to its degradation by the proteasome.</text>
</comment>
<comment type="PTM">
    <text evidence="5 6">Phosphorylation at Ser-60 reduces transactivation capacity (PubMed:11729123). Phosphorylation at Ser-281 reduces transactivation capacity and increases ubiquitin-dependent proteasome degradation (PubMed:16027724).</text>
</comment>
<comment type="similarity">
    <text evidence="12">Belongs to the Caudal homeobox family.</text>
</comment>
<keyword id="KW-0010">Activator</keyword>
<keyword id="KW-0217">Developmental protein</keyword>
<keyword id="KW-0238">DNA-binding</keyword>
<keyword id="KW-0371">Homeobox</keyword>
<keyword id="KW-0539">Nucleus</keyword>
<keyword id="KW-0597">Phosphoprotein</keyword>
<keyword id="KW-1185">Reference proteome</keyword>
<keyword id="KW-0804">Transcription</keyword>
<keyword id="KW-0805">Transcription regulation</keyword>
<keyword id="KW-0832">Ubl conjugation</keyword>
<organism>
    <name type="scientific">Mus musculus</name>
    <name type="common">Mouse</name>
    <dbReference type="NCBI Taxonomy" id="10090"/>
    <lineage>
        <taxon>Eukaryota</taxon>
        <taxon>Metazoa</taxon>
        <taxon>Chordata</taxon>
        <taxon>Craniata</taxon>
        <taxon>Vertebrata</taxon>
        <taxon>Euteleostomi</taxon>
        <taxon>Mammalia</taxon>
        <taxon>Eutheria</taxon>
        <taxon>Euarchontoglires</taxon>
        <taxon>Glires</taxon>
        <taxon>Rodentia</taxon>
        <taxon>Myomorpha</taxon>
        <taxon>Muroidea</taxon>
        <taxon>Muridae</taxon>
        <taxon>Murinae</taxon>
        <taxon>Mus</taxon>
        <taxon>Mus</taxon>
    </lineage>
</organism>
<gene>
    <name type="primary">Cdx2</name>
    <name type="synonym">Cdx-2</name>
</gene>
<feature type="chain" id="PRO_0000048851" description="Homeobox protein CDX-2">
    <location>
        <begin position="1"/>
        <end position="311"/>
    </location>
</feature>
<feature type="DNA-binding region" description="Homeobox" evidence="3">
    <location>
        <begin position="185"/>
        <end position="244"/>
    </location>
</feature>
<feature type="region of interest" description="Disordered" evidence="4">
    <location>
        <begin position="111"/>
        <end position="151"/>
    </location>
</feature>
<feature type="region of interest" description="Interaction with DNA" evidence="2">
    <location>
        <begin position="185"/>
        <end position="215"/>
    </location>
</feature>
<feature type="region of interest" description="Interaction with 5-mCpG DNA" evidence="2">
    <location>
        <begin position="227"/>
        <end position="241"/>
    </location>
</feature>
<feature type="region of interest" description="Disordered" evidence="4">
    <location>
        <begin position="239"/>
        <end position="311"/>
    </location>
</feature>
<feature type="short sequence motif" description="4S motif; modulates transactivation activity and protein stability" evidence="6">
    <location>
        <begin position="281"/>
        <end position="293"/>
    </location>
</feature>
<feature type="compositionally biased region" description="Basic residues" evidence="4">
    <location>
        <begin position="114"/>
        <end position="124"/>
    </location>
</feature>
<feature type="compositionally biased region" description="Low complexity" evidence="4">
    <location>
        <begin position="248"/>
        <end position="257"/>
    </location>
</feature>
<feature type="compositionally biased region" description="Pro residues" evidence="4">
    <location>
        <begin position="258"/>
        <end position="268"/>
    </location>
</feature>
<feature type="compositionally biased region" description="Low complexity" evidence="4">
    <location>
        <begin position="285"/>
        <end position="298"/>
    </location>
</feature>
<feature type="modified residue" description="Phosphoserine" evidence="5">
    <location>
        <position position="60"/>
    </location>
</feature>
<feature type="modified residue" description="Phosphoserine; by CDK2" evidence="6">
    <location>
        <position position="281"/>
    </location>
</feature>
<feature type="mutagenesis site" description="Reduced phosphorylation. Does not affect nuclear localization." evidence="5">
    <original>S</original>
    <variation>A</variation>
    <location>
        <position position="60"/>
    </location>
</feature>
<feature type="sequence conflict" description="In Ref. 2; AAB32251." evidence="12" ref="2">
    <original>Y</original>
    <variation>H</variation>
    <location>
        <position position="69"/>
    </location>
</feature>
<protein>
    <recommendedName>
        <fullName>Homeobox protein CDX-2</fullName>
    </recommendedName>
    <alternativeName>
        <fullName>Caudal-type homeobox protein 2</fullName>
    </alternativeName>
</protein>
<sequence length="311" mass="33476">MYVSYLLDKDVSMYPSSVRHSGGLNLAPQNFVSPPQYPDYGGYHVAAAAAATANLDSAQSPGPSWPTAYGAPLREDWNGYAPGGAAAANAVAHGLNGGSPAAAMGYSSPAEYHAHHHPHHHPHHPAASPSCASGLLQTLNLGPPGPAATAAAEQLSPSGQRRNLCEWMRKPAQQSLGSQVKTRTKDKYRVVYTDHQRLELEKEFHFSRYITIRRKSELAATLGLSERQVKIWFQNRRAKERKIKKKQQQQQQQQQQQPPQPPPQPSQPQPGALRSVPEPLSPVTSLQGSVPGSVPGVLGPAGGVLNSTVTQ</sequence>
<accession>P43241</accession>
<name>CDX2_MOUSE</name>